<proteinExistence type="inferred from homology"/>
<name>GDF8_BOSIN</name>
<organism>
    <name type="scientific">Bos indicus</name>
    <name type="common">Zebu</name>
    <dbReference type="NCBI Taxonomy" id="9915"/>
    <lineage>
        <taxon>Eukaryota</taxon>
        <taxon>Metazoa</taxon>
        <taxon>Chordata</taxon>
        <taxon>Craniata</taxon>
        <taxon>Vertebrata</taxon>
        <taxon>Euteleostomi</taxon>
        <taxon>Mammalia</taxon>
        <taxon>Eutheria</taxon>
        <taxon>Laurasiatheria</taxon>
        <taxon>Artiodactyla</taxon>
        <taxon>Ruminantia</taxon>
        <taxon>Pecora</taxon>
        <taxon>Bovidae</taxon>
        <taxon>Bovinae</taxon>
        <taxon>Bos</taxon>
    </lineage>
</organism>
<sequence length="375" mass="42551">MQKLQISVYIYLFMLIVAGPVDLNENSEQKENVEKEGLCNACLWRENTTSSRLEAIKIQILSKLRLETAPNISKDAIRQLLPKAPPLLELIDQFDVQRDASSDGSLEDDDYHARTETVITMPTESDLLTQVEGKPKCCFFKFSSKIQYNKLVKAQLWIYLRPVKTPATVFVQILRLIKPMKDGTRYTGIRSLKLDMNPGTGIWQSIDVKTVLQNWLKQPESNLGIEIKALDENGHDLAVTFPEPGEDGLTPFLEVKVTDTPKRSRRDFGLDCDEHSTESRCCRYPLTVDFEAFGWDWIIAPKRYKANYCSGECEFVFLQKYPHTHLVHQANPRGSAGPCCTPTKMSPINMLYFNGEGQIIYGKIPAMVVDRCGCS</sequence>
<keyword id="KW-0165">Cleavage on pair of basic residues</keyword>
<keyword id="KW-0202">Cytokine</keyword>
<keyword id="KW-1015">Disulfide bond</keyword>
<keyword id="KW-0325">Glycoprotein</keyword>
<keyword id="KW-0339">Growth factor</keyword>
<keyword id="KW-0358">Heparin-binding</keyword>
<keyword id="KW-1185">Reference proteome</keyword>
<keyword id="KW-0964">Secreted</keyword>
<keyword id="KW-0732">Signal</keyword>
<evidence type="ECO:0000250" key="1">
    <source>
        <dbReference type="UniProtKB" id="O08689"/>
    </source>
</evidence>
<evidence type="ECO:0000250" key="2">
    <source>
        <dbReference type="UniProtKB" id="O14793"/>
    </source>
</evidence>
<evidence type="ECO:0000255" key="3"/>
<evidence type="ECO:0000305" key="4"/>
<accession>Q5RZV4</accession>
<dbReference type="EMBL" id="AY794986">
    <property type="protein sequence ID" value="AAV63982.1"/>
    <property type="molecule type" value="Genomic_DNA"/>
</dbReference>
<dbReference type="RefSeq" id="XP_019825045.1">
    <property type="nucleotide sequence ID" value="XM_019969486.2"/>
</dbReference>
<dbReference type="SMR" id="Q5RZV4"/>
<dbReference type="GlyCosmos" id="Q5RZV4">
    <property type="glycosylation" value="2 sites, No reported glycans"/>
</dbReference>
<dbReference type="GeneID" id="109565565"/>
<dbReference type="KEGG" id="biu:109565565"/>
<dbReference type="CTD" id="2660"/>
<dbReference type="OrthoDB" id="23167at91561"/>
<dbReference type="Proteomes" id="UP000515132">
    <property type="component" value="Chromosome 2"/>
</dbReference>
<dbReference type="GO" id="GO:0005615">
    <property type="term" value="C:extracellular space"/>
    <property type="evidence" value="ECO:0007669"/>
    <property type="project" value="UniProtKB-KW"/>
</dbReference>
<dbReference type="GO" id="GO:0005125">
    <property type="term" value="F:cytokine activity"/>
    <property type="evidence" value="ECO:0007669"/>
    <property type="project" value="UniProtKB-KW"/>
</dbReference>
<dbReference type="GO" id="GO:0008083">
    <property type="term" value="F:growth factor activity"/>
    <property type="evidence" value="ECO:0007669"/>
    <property type="project" value="UniProtKB-KW"/>
</dbReference>
<dbReference type="GO" id="GO:0008201">
    <property type="term" value="F:heparin binding"/>
    <property type="evidence" value="ECO:0007669"/>
    <property type="project" value="UniProtKB-KW"/>
</dbReference>
<dbReference type="GO" id="GO:0042802">
    <property type="term" value="F:identical protein binding"/>
    <property type="evidence" value="ECO:0000250"/>
    <property type="project" value="UniProtKB"/>
</dbReference>
<dbReference type="GO" id="GO:0014839">
    <property type="term" value="P:myoblast migration involved in skeletal muscle regeneration"/>
    <property type="evidence" value="ECO:0000250"/>
    <property type="project" value="UniProtKB"/>
</dbReference>
<dbReference type="GO" id="GO:0010592">
    <property type="term" value="P:positive regulation of lamellipodium assembly"/>
    <property type="evidence" value="ECO:0000250"/>
    <property type="project" value="UniProtKB"/>
</dbReference>
<dbReference type="GO" id="GO:0010759">
    <property type="term" value="P:positive regulation of macrophage chemotaxis"/>
    <property type="evidence" value="ECO:0000250"/>
    <property type="project" value="UniProtKB"/>
</dbReference>
<dbReference type="CDD" id="cd19388">
    <property type="entry name" value="TGF_beta_GDF8"/>
    <property type="match status" value="1"/>
</dbReference>
<dbReference type="FunFam" id="2.60.120.970:FF:000001">
    <property type="entry name" value="Growth/differentiation factor 8"/>
    <property type="match status" value="1"/>
</dbReference>
<dbReference type="FunFam" id="2.10.90.10:FF:000006">
    <property type="entry name" value="growth/differentiation factor 8"/>
    <property type="match status" value="1"/>
</dbReference>
<dbReference type="Gene3D" id="2.60.120.970">
    <property type="match status" value="1"/>
</dbReference>
<dbReference type="Gene3D" id="2.10.90.10">
    <property type="entry name" value="Cystine-knot cytokines"/>
    <property type="match status" value="1"/>
</dbReference>
<dbReference type="InterPro" id="IPR029034">
    <property type="entry name" value="Cystine-knot_cytokine"/>
</dbReference>
<dbReference type="InterPro" id="IPR001839">
    <property type="entry name" value="TGF-b_C"/>
</dbReference>
<dbReference type="InterPro" id="IPR001111">
    <property type="entry name" value="TGF-b_propeptide"/>
</dbReference>
<dbReference type="InterPro" id="IPR015615">
    <property type="entry name" value="TGF-beta-rel"/>
</dbReference>
<dbReference type="InterPro" id="IPR017948">
    <property type="entry name" value="TGFb_CS"/>
</dbReference>
<dbReference type="PANTHER" id="PTHR11848:SF150">
    <property type="entry name" value="GROWTH_DIFFERENTIATION FACTOR 8"/>
    <property type="match status" value="1"/>
</dbReference>
<dbReference type="PANTHER" id="PTHR11848">
    <property type="entry name" value="TGF-BETA FAMILY"/>
    <property type="match status" value="1"/>
</dbReference>
<dbReference type="Pfam" id="PF00019">
    <property type="entry name" value="TGF_beta"/>
    <property type="match status" value="1"/>
</dbReference>
<dbReference type="Pfam" id="PF00688">
    <property type="entry name" value="TGFb_propeptide"/>
    <property type="match status" value="1"/>
</dbReference>
<dbReference type="SMART" id="SM00204">
    <property type="entry name" value="TGFB"/>
    <property type="match status" value="1"/>
</dbReference>
<dbReference type="SUPFAM" id="SSF57501">
    <property type="entry name" value="Cystine-knot cytokines"/>
    <property type="match status" value="1"/>
</dbReference>
<dbReference type="PROSITE" id="PS00250">
    <property type="entry name" value="TGF_BETA_1"/>
    <property type="match status" value="1"/>
</dbReference>
<dbReference type="PROSITE" id="PS51362">
    <property type="entry name" value="TGF_BETA_2"/>
    <property type="match status" value="1"/>
</dbReference>
<feature type="signal peptide" evidence="3">
    <location>
        <begin position="1"/>
        <end position="18"/>
    </location>
</feature>
<feature type="propeptide" id="PRO_0000033934" evidence="3">
    <location>
        <begin position="19"/>
        <end position="266"/>
    </location>
</feature>
<feature type="chain" id="PRO_0000033935" description="Growth/differentiation factor 8">
    <location>
        <begin position="267"/>
        <end position="375"/>
    </location>
</feature>
<feature type="site" description="Cleavage" evidence="1">
    <location>
        <begin position="98"/>
        <end position="99"/>
    </location>
</feature>
<feature type="glycosylation site" description="N-linked (GlcNAc...) asparagine" evidence="3">
    <location>
        <position position="47"/>
    </location>
</feature>
<feature type="glycosylation site" description="N-linked (GlcNAc...) asparagine" evidence="3">
    <location>
        <position position="71"/>
    </location>
</feature>
<feature type="disulfide bond" evidence="2">
    <location>
        <begin position="272"/>
        <end position="282"/>
    </location>
</feature>
<feature type="disulfide bond" evidence="2">
    <location>
        <begin position="281"/>
        <end position="340"/>
    </location>
</feature>
<feature type="disulfide bond" evidence="2">
    <location>
        <begin position="309"/>
        <end position="372"/>
    </location>
</feature>
<feature type="disulfide bond" evidence="2">
    <location>
        <begin position="313"/>
        <end position="374"/>
    </location>
</feature>
<feature type="disulfide bond" description="Interchain" evidence="2">
    <location>
        <position position="339"/>
    </location>
</feature>
<comment type="function">
    <text evidence="1">Acts specifically as a negative regulator of skeletal muscle growth.</text>
</comment>
<comment type="subunit">
    <text evidence="1">Homodimer; disulfide-linked. Interacts with WFIKKN2, leading to inhibit its activity. Interacts with FSTL3.</text>
</comment>
<comment type="subcellular location">
    <subcellularLocation>
        <location evidence="1">Secreted</location>
    </subcellularLocation>
</comment>
<comment type="PTM">
    <text evidence="1">Synthesized as large precursor molecule that undergoes proteolytic cleavage to generate an N-terminal propeptide and a disulfide linked C-terminal dimer, which is the biologically active molecule. The circulating form consists of a latent complex of the C-terminal dimer and other proteins, including its propeptide, which maintain the C-terminal dimer in a latent, inactive state. Ligand activation requires additional cleavage of the prodomain by a tolloid-like metalloproteinase.</text>
</comment>
<comment type="similarity">
    <text evidence="4">Belongs to the TGF-beta family.</text>
</comment>
<reference key="1">
    <citation type="submission" date="2004-10" db="EMBL/GenBank/DDBJ databases">
        <title>Nucleotide sequence of myostatin gene in Bos indicus.</title>
        <authorList>
            <person name="Tantia M.S."/>
            <person name="Mishra B."/>
            <person name="Bharani Kumar S.T."/>
            <person name="Vijh R.K."/>
        </authorList>
    </citation>
    <scope>NUCLEOTIDE SEQUENCE [GENOMIC DNA]</scope>
</reference>
<gene>
    <name type="primary">MSTN</name>
    <name type="synonym">GDF8</name>
</gene>
<protein>
    <recommendedName>
        <fullName>Growth/differentiation factor 8</fullName>
        <shortName>GDF-8</shortName>
    </recommendedName>
    <alternativeName>
        <fullName>Myostatin</fullName>
    </alternativeName>
</protein>